<gene>
    <name type="primary">CFT1</name>
    <name type="ORF">CIMG_02253</name>
</gene>
<name>CFT1_COCIM</name>
<dbReference type="EMBL" id="GG704911">
    <property type="protein sequence ID" value="EAS36899.3"/>
    <property type="molecule type" value="Genomic_DNA"/>
</dbReference>
<dbReference type="RefSeq" id="XP_001248482.1">
    <property type="nucleotide sequence ID" value="XM_001248481.2"/>
</dbReference>
<dbReference type="SMR" id="Q1E5B0"/>
<dbReference type="FunCoup" id="Q1E5B0">
    <property type="interactions" value="1086"/>
</dbReference>
<dbReference type="STRING" id="246410.Q1E5B0"/>
<dbReference type="GeneID" id="4568108"/>
<dbReference type="KEGG" id="cim:CIMG_02253"/>
<dbReference type="VEuPathDB" id="FungiDB:CIMG_02253"/>
<dbReference type="InParanoid" id="Q1E5B0"/>
<dbReference type="OMA" id="PMTKFKL"/>
<dbReference type="OrthoDB" id="6109at2759"/>
<dbReference type="Proteomes" id="UP000001261">
    <property type="component" value="Unassembled WGS sequence"/>
</dbReference>
<dbReference type="GO" id="GO:0005634">
    <property type="term" value="C:nucleus"/>
    <property type="evidence" value="ECO:0007669"/>
    <property type="project" value="UniProtKB-SubCell"/>
</dbReference>
<dbReference type="GO" id="GO:0003723">
    <property type="term" value="F:RNA binding"/>
    <property type="evidence" value="ECO:0007669"/>
    <property type="project" value="UniProtKB-KW"/>
</dbReference>
<dbReference type="GO" id="GO:0006397">
    <property type="term" value="P:mRNA processing"/>
    <property type="evidence" value="ECO:0007669"/>
    <property type="project" value="UniProtKB-KW"/>
</dbReference>
<dbReference type="FunFam" id="2.130.10.10:FF:000625">
    <property type="entry name" value="mRNA cleavage and polyadenylation factor subunit"/>
    <property type="match status" value="1"/>
</dbReference>
<dbReference type="FunFam" id="2.130.10.10:FF:000788">
    <property type="entry name" value="mRNA cleavage and polyadenylation factor subunit"/>
    <property type="match status" value="1"/>
</dbReference>
<dbReference type="Gene3D" id="2.130.10.10">
    <property type="entry name" value="YVTN repeat-like/Quinoprotein amine dehydrogenase"/>
    <property type="match status" value="2"/>
</dbReference>
<dbReference type="InterPro" id="IPR018846">
    <property type="entry name" value="Beta-prop_RSE1/DDB1/CPSF1_1st"/>
</dbReference>
<dbReference type="InterPro" id="IPR004871">
    <property type="entry name" value="Cleavage/polyA-sp_fac_asu_C"/>
</dbReference>
<dbReference type="InterPro" id="IPR050358">
    <property type="entry name" value="RSE1/DDB1/CFT1/CPSF1"/>
</dbReference>
<dbReference type="InterPro" id="IPR015943">
    <property type="entry name" value="WD40/YVTN_repeat-like_dom_sf"/>
</dbReference>
<dbReference type="PANTHER" id="PTHR10644">
    <property type="entry name" value="DNA REPAIR/RNA PROCESSING CPSF FAMILY"/>
    <property type="match status" value="1"/>
</dbReference>
<dbReference type="Pfam" id="PF10433">
    <property type="entry name" value="Beta-prop_RSE1_1st"/>
    <property type="match status" value="1"/>
</dbReference>
<dbReference type="Pfam" id="PF23726">
    <property type="entry name" value="Beta-prop_RSE1_2nd"/>
    <property type="match status" value="1"/>
</dbReference>
<dbReference type="Pfam" id="PF03178">
    <property type="entry name" value="CPSF_A"/>
    <property type="match status" value="1"/>
</dbReference>
<dbReference type="SUPFAM" id="SSF101908">
    <property type="entry name" value="Putative isomerase YbhE"/>
    <property type="match status" value="1"/>
</dbReference>
<accession>Q1E5B0</accession>
<accession>J3KLB0</accession>
<comment type="function">
    <text evidence="1">RNA-binding component of the cleavage and polyadenylation factor (CPF) complex, which plays a key role in polyadenylation-dependent pre-mRNA 3'-end formation and cooperates with cleavage factors including the CFIA complex and NAB4/CFIB. Involved in poly(A) site recognition. May be involved in coupling transcription termination and mRNA 3'-end formation (By similarity).</text>
</comment>
<comment type="subcellular location">
    <subcellularLocation>
        <location evidence="1">Nucleus</location>
    </subcellularLocation>
</comment>
<comment type="similarity">
    <text evidence="3">Belongs to the CFT1 family.</text>
</comment>
<sequence length="1387" mass="152937">MQCYTELLPPSGVTHAISLPFLSATSNNLIVAKTSILQVFSLVNVAYGTSAPPNADDKGRVERQQYTKLILVAEYDLSGTITGLGRVKILDSRSGGEALLVSTRNAKLSLVEWDHERHGISTISIHYYEREDVHSSPWTPDLRLCPSLLAVDPSSRCAILNFGIHSVAILPFHQTGDDLVMDEFDEDLDEKPEGASNIPAQAAVANDTTMYKTPYASSFVLPLTALDPALVHPIHLAFLYEYREPTFGILYSHLTTSSALLHDRKDIVSYAVFTLDIQQRASTTLITVSRLPSDLWKVVPLPPPIGGALLIGSNELIHVDQAGKTNAVGINEFARQASAFSMVDQSDLGLRLEGCVVEQLGTDSGDILLVLADGKMAILRLKVDGRSVSGISAQLVSEKAGGSILKARPSCSASLGRGKVFFGSEETDSLLIGWSRPSQSMRKPKVESADDVFGDHSETEDDEDDIYEDDLYSTPVNQTTLSKTTSQTNGLNKDDFVFRSHDRLWNLGPMSDVTLGRPPGSHDKNRKQSSSRTSADLELVVTQGKGNAGGLAVLQRELDPYVIDSMKMDNVDGVWSIQVGAPDSTNTRTSSRNYDKYLVFSKSTEPGKEQSVVYSVGGSGIEEMKAPEFNPNEDSTVDIGTLAGGTRVVQVLKSEVRSYDTNLELAQIYPIWDEDTSDELSVVSASFAEPYVLIVRDDQSLLLLQADKSGDLDEVNIDGILSSHRWLSGCLYLDKYHTFVPTKGQDQPLSDNILLVLLRADHTLFIFSLPTLTEPLCSVDGVDLLPLILSCEPPPKRVTYRETLSEVLIADLGDSISRQPYMILRTANDDLILYQPYHPKTSLDKPELRFVKIIDHFLPRFDPSPKAYMPHSKFLRAYSDICGYKTVFMSGSNPCFVMKSSTSSPHVLRLRGEAVSSLSSFHIPACEKGFAYVDASNMVRMCRLPSNTRFDNSWVTRKVHVGDQIDCVEYFAHSEIYALGSSHKVDFKLPEDDEIHPEWRSEVISFMPQLERGCIKLLSPRTWSVVDSYELGDAERVMCMKTINMEISEITHEMKDMLVVGTATVRGEDITPRGSIYVFEIIEVAPDPDRPETNRKLKIFAKDDVKGAVTAVSGIGGQGFLIMAQGQKCMVRGLKEDGSLLPVAFMDMQCYVKVLKELQGTGLCIMGDALKGIWFAGYSEEPYRLTLFGKDNEYLQVIAADFLPDGKRLYILVADDDCTIHVLEYDPEDPTSSKGDRLLHRSSFHTGHFTSTMTLLPEHSSSPSADDPEEDDMDVDYVPKSYQVLVTSQEGSIGVVTPLTEDSYRRLSALQSQLVTSMEHPCGLNPKAYRAVESDGFGGRGIVDGNLLLRWLDMGVQRKAEIAGRVGADIESIRVDLETISGGLDFL</sequence>
<organism>
    <name type="scientific">Coccidioides immitis (strain RS)</name>
    <name type="common">Valley fever fungus</name>
    <dbReference type="NCBI Taxonomy" id="246410"/>
    <lineage>
        <taxon>Eukaryota</taxon>
        <taxon>Fungi</taxon>
        <taxon>Dikarya</taxon>
        <taxon>Ascomycota</taxon>
        <taxon>Pezizomycotina</taxon>
        <taxon>Eurotiomycetes</taxon>
        <taxon>Eurotiomycetidae</taxon>
        <taxon>Onygenales</taxon>
        <taxon>Onygenaceae</taxon>
        <taxon>Coccidioides</taxon>
    </lineage>
</organism>
<feature type="chain" id="PRO_0000290627" description="Protein CFT1">
    <location>
        <begin position="1"/>
        <end position="1387"/>
    </location>
</feature>
<feature type="region of interest" description="Disordered" evidence="2">
    <location>
        <begin position="440"/>
        <end position="493"/>
    </location>
</feature>
<feature type="region of interest" description="Disordered" evidence="2">
    <location>
        <begin position="509"/>
        <end position="534"/>
    </location>
</feature>
<feature type="compositionally biased region" description="Basic and acidic residues" evidence="2">
    <location>
        <begin position="444"/>
        <end position="457"/>
    </location>
</feature>
<feature type="compositionally biased region" description="Acidic residues" evidence="2">
    <location>
        <begin position="458"/>
        <end position="471"/>
    </location>
</feature>
<feature type="compositionally biased region" description="Polar residues" evidence="2">
    <location>
        <begin position="474"/>
        <end position="491"/>
    </location>
</feature>
<evidence type="ECO:0000250" key="1"/>
<evidence type="ECO:0000256" key="2">
    <source>
        <dbReference type="SAM" id="MobiDB-lite"/>
    </source>
</evidence>
<evidence type="ECO:0000305" key="3"/>
<proteinExistence type="inferred from homology"/>
<protein>
    <recommendedName>
        <fullName>Protein CFT1</fullName>
    </recommendedName>
    <alternativeName>
        <fullName>Cleavage factor two protein 1</fullName>
    </alternativeName>
</protein>
<reference key="1">
    <citation type="journal article" date="2009" name="Genome Res.">
        <title>Comparative genomic analyses of the human fungal pathogens Coccidioides and their relatives.</title>
        <authorList>
            <person name="Sharpton T.J."/>
            <person name="Stajich J.E."/>
            <person name="Rounsley S.D."/>
            <person name="Gardner M.J."/>
            <person name="Wortman J.R."/>
            <person name="Jordar V.S."/>
            <person name="Maiti R."/>
            <person name="Kodira C.D."/>
            <person name="Neafsey D.E."/>
            <person name="Zeng Q."/>
            <person name="Hung C.-Y."/>
            <person name="McMahan C."/>
            <person name="Muszewska A."/>
            <person name="Grynberg M."/>
            <person name="Mandel M.A."/>
            <person name="Kellner E.M."/>
            <person name="Barker B.M."/>
            <person name="Galgiani J.N."/>
            <person name="Orbach M.J."/>
            <person name="Kirkland T.N."/>
            <person name="Cole G.T."/>
            <person name="Henn M.R."/>
            <person name="Birren B.W."/>
            <person name="Taylor J.W."/>
        </authorList>
    </citation>
    <scope>NUCLEOTIDE SEQUENCE [LARGE SCALE GENOMIC DNA]</scope>
    <source>
        <strain>RS</strain>
    </source>
</reference>
<reference key="2">
    <citation type="journal article" date="2010" name="Genome Res.">
        <title>Population genomic sequencing of Coccidioides fungi reveals recent hybridization and transposon control.</title>
        <authorList>
            <person name="Neafsey D.E."/>
            <person name="Barker B.M."/>
            <person name="Sharpton T.J."/>
            <person name="Stajich J.E."/>
            <person name="Park D.J."/>
            <person name="Whiston E."/>
            <person name="Hung C.-Y."/>
            <person name="McMahan C."/>
            <person name="White J."/>
            <person name="Sykes S."/>
            <person name="Heiman D."/>
            <person name="Young S."/>
            <person name="Zeng Q."/>
            <person name="Abouelleil A."/>
            <person name="Aftuck L."/>
            <person name="Bessette D."/>
            <person name="Brown A."/>
            <person name="FitzGerald M."/>
            <person name="Lui A."/>
            <person name="Macdonald J.P."/>
            <person name="Priest M."/>
            <person name="Orbach M.J."/>
            <person name="Galgiani J.N."/>
            <person name="Kirkland T.N."/>
            <person name="Cole G.T."/>
            <person name="Birren B.W."/>
            <person name="Henn M.R."/>
            <person name="Taylor J.W."/>
            <person name="Rounsley S.D."/>
        </authorList>
    </citation>
    <scope>GENOME REANNOTATION</scope>
    <source>
        <strain>RS</strain>
    </source>
</reference>
<keyword id="KW-0507">mRNA processing</keyword>
<keyword id="KW-0539">Nucleus</keyword>
<keyword id="KW-1185">Reference proteome</keyword>
<keyword id="KW-0694">RNA-binding</keyword>